<comment type="function">
    <text evidence="1">Major role in the synthesis of nucleoside triphosphates other than ATP. The ATP gamma phosphate is transferred to the NDP beta phosphate via a ping-pong mechanism, using a phosphorylated active-site intermediate.</text>
</comment>
<comment type="catalytic activity">
    <reaction evidence="1">
        <text>a 2'-deoxyribonucleoside 5'-diphosphate + ATP = a 2'-deoxyribonucleoside 5'-triphosphate + ADP</text>
        <dbReference type="Rhea" id="RHEA:44640"/>
        <dbReference type="ChEBI" id="CHEBI:30616"/>
        <dbReference type="ChEBI" id="CHEBI:61560"/>
        <dbReference type="ChEBI" id="CHEBI:73316"/>
        <dbReference type="ChEBI" id="CHEBI:456216"/>
        <dbReference type="EC" id="2.7.4.6"/>
    </reaction>
</comment>
<comment type="catalytic activity">
    <reaction evidence="1">
        <text>a ribonucleoside 5'-diphosphate + ATP = a ribonucleoside 5'-triphosphate + ADP</text>
        <dbReference type="Rhea" id="RHEA:18113"/>
        <dbReference type="ChEBI" id="CHEBI:30616"/>
        <dbReference type="ChEBI" id="CHEBI:57930"/>
        <dbReference type="ChEBI" id="CHEBI:61557"/>
        <dbReference type="ChEBI" id="CHEBI:456216"/>
        <dbReference type="EC" id="2.7.4.6"/>
    </reaction>
</comment>
<comment type="cofactor">
    <cofactor evidence="1">
        <name>Mg(2+)</name>
        <dbReference type="ChEBI" id="CHEBI:18420"/>
    </cofactor>
</comment>
<comment type="subunit">
    <text evidence="1">Homotetramer.</text>
</comment>
<comment type="subcellular location">
    <subcellularLocation>
        <location evidence="1">Cytoplasm</location>
    </subcellularLocation>
</comment>
<comment type="similarity">
    <text evidence="1">Belongs to the NDK family.</text>
</comment>
<evidence type="ECO:0000255" key="1">
    <source>
        <dbReference type="HAMAP-Rule" id="MF_00451"/>
    </source>
</evidence>
<gene>
    <name evidence="1" type="primary">ndk</name>
    <name type="ordered locus">Spro_3613</name>
</gene>
<keyword id="KW-0067">ATP-binding</keyword>
<keyword id="KW-0963">Cytoplasm</keyword>
<keyword id="KW-0418">Kinase</keyword>
<keyword id="KW-0460">Magnesium</keyword>
<keyword id="KW-0479">Metal-binding</keyword>
<keyword id="KW-0546">Nucleotide metabolism</keyword>
<keyword id="KW-0547">Nucleotide-binding</keyword>
<keyword id="KW-0597">Phosphoprotein</keyword>
<keyword id="KW-0808">Transferase</keyword>
<sequence length="141" mass="15601">MTVERTFSIIKPNAVANNDIGAIYARFERAGFKIIASKMLRLTREQAEGFYAEHKGRPFFDGLVEFMTSGPIVVQVLEAENAVQRNRDIMGATNPDNALAGTLRADYADSFTANAVHGSDAVESAQREIAYFFNESEICSR</sequence>
<accession>A8GHW9</accession>
<proteinExistence type="inferred from homology"/>
<feature type="chain" id="PRO_1000060284" description="Nucleoside diphosphate kinase">
    <location>
        <begin position="1"/>
        <end position="141"/>
    </location>
</feature>
<feature type="active site" description="Pros-phosphohistidine intermediate" evidence="1">
    <location>
        <position position="117"/>
    </location>
</feature>
<feature type="binding site" evidence="1">
    <location>
        <position position="11"/>
    </location>
    <ligand>
        <name>ATP</name>
        <dbReference type="ChEBI" id="CHEBI:30616"/>
    </ligand>
</feature>
<feature type="binding site" evidence="1">
    <location>
        <position position="59"/>
    </location>
    <ligand>
        <name>ATP</name>
        <dbReference type="ChEBI" id="CHEBI:30616"/>
    </ligand>
</feature>
<feature type="binding site" evidence="1">
    <location>
        <position position="87"/>
    </location>
    <ligand>
        <name>ATP</name>
        <dbReference type="ChEBI" id="CHEBI:30616"/>
    </ligand>
</feature>
<feature type="binding site" evidence="1">
    <location>
        <position position="93"/>
    </location>
    <ligand>
        <name>ATP</name>
        <dbReference type="ChEBI" id="CHEBI:30616"/>
    </ligand>
</feature>
<feature type="binding site" evidence="1">
    <location>
        <position position="104"/>
    </location>
    <ligand>
        <name>ATP</name>
        <dbReference type="ChEBI" id="CHEBI:30616"/>
    </ligand>
</feature>
<feature type="binding site" evidence="1">
    <location>
        <position position="114"/>
    </location>
    <ligand>
        <name>ATP</name>
        <dbReference type="ChEBI" id="CHEBI:30616"/>
    </ligand>
</feature>
<dbReference type="EC" id="2.7.4.6" evidence="1"/>
<dbReference type="EMBL" id="CP000826">
    <property type="protein sequence ID" value="ABV42709.1"/>
    <property type="molecule type" value="Genomic_DNA"/>
</dbReference>
<dbReference type="SMR" id="A8GHW9"/>
<dbReference type="STRING" id="399741.Spro_3613"/>
<dbReference type="KEGG" id="spe:Spro_3613"/>
<dbReference type="eggNOG" id="COG0105">
    <property type="taxonomic scope" value="Bacteria"/>
</dbReference>
<dbReference type="HOGENOM" id="CLU_060216_8_1_6"/>
<dbReference type="OrthoDB" id="9801161at2"/>
<dbReference type="GO" id="GO:0005737">
    <property type="term" value="C:cytoplasm"/>
    <property type="evidence" value="ECO:0007669"/>
    <property type="project" value="UniProtKB-SubCell"/>
</dbReference>
<dbReference type="GO" id="GO:0005524">
    <property type="term" value="F:ATP binding"/>
    <property type="evidence" value="ECO:0007669"/>
    <property type="project" value="UniProtKB-UniRule"/>
</dbReference>
<dbReference type="GO" id="GO:0046872">
    <property type="term" value="F:metal ion binding"/>
    <property type="evidence" value="ECO:0007669"/>
    <property type="project" value="UniProtKB-KW"/>
</dbReference>
<dbReference type="GO" id="GO:0004550">
    <property type="term" value="F:nucleoside diphosphate kinase activity"/>
    <property type="evidence" value="ECO:0007669"/>
    <property type="project" value="UniProtKB-UniRule"/>
</dbReference>
<dbReference type="GO" id="GO:0006241">
    <property type="term" value="P:CTP biosynthetic process"/>
    <property type="evidence" value="ECO:0007669"/>
    <property type="project" value="UniProtKB-UniRule"/>
</dbReference>
<dbReference type="GO" id="GO:0006183">
    <property type="term" value="P:GTP biosynthetic process"/>
    <property type="evidence" value="ECO:0007669"/>
    <property type="project" value="UniProtKB-UniRule"/>
</dbReference>
<dbReference type="GO" id="GO:0006228">
    <property type="term" value="P:UTP biosynthetic process"/>
    <property type="evidence" value="ECO:0007669"/>
    <property type="project" value="UniProtKB-UniRule"/>
</dbReference>
<dbReference type="CDD" id="cd04413">
    <property type="entry name" value="NDPk_I"/>
    <property type="match status" value="1"/>
</dbReference>
<dbReference type="FunFam" id="3.30.70.141:FF:000001">
    <property type="entry name" value="Nucleoside diphosphate kinase"/>
    <property type="match status" value="1"/>
</dbReference>
<dbReference type="Gene3D" id="3.30.70.141">
    <property type="entry name" value="Nucleoside diphosphate kinase-like domain"/>
    <property type="match status" value="1"/>
</dbReference>
<dbReference type="HAMAP" id="MF_00451">
    <property type="entry name" value="NDP_kinase"/>
    <property type="match status" value="1"/>
</dbReference>
<dbReference type="InterPro" id="IPR034907">
    <property type="entry name" value="NDK-like_dom"/>
</dbReference>
<dbReference type="InterPro" id="IPR036850">
    <property type="entry name" value="NDK-like_dom_sf"/>
</dbReference>
<dbReference type="InterPro" id="IPR001564">
    <property type="entry name" value="Nucleoside_diP_kinase"/>
</dbReference>
<dbReference type="InterPro" id="IPR023005">
    <property type="entry name" value="Nucleoside_diP_kinase_AS"/>
</dbReference>
<dbReference type="NCBIfam" id="NF001908">
    <property type="entry name" value="PRK00668.1"/>
    <property type="match status" value="1"/>
</dbReference>
<dbReference type="PANTHER" id="PTHR46161">
    <property type="entry name" value="NUCLEOSIDE DIPHOSPHATE KINASE"/>
    <property type="match status" value="1"/>
</dbReference>
<dbReference type="PANTHER" id="PTHR46161:SF3">
    <property type="entry name" value="NUCLEOSIDE DIPHOSPHATE KINASE DDB_G0292928-RELATED"/>
    <property type="match status" value="1"/>
</dbReference>
<dbReference type="Pfam" id="PF00334">
    <property type="entry name" value="NDK"/>
    <property type="match status" value="1"/>
</dbReference>
<dbReference type="PRINTS" id="PR01243">
    <property type="entry name" value="NUCDPKINASE"/>
</dbReference>
<dbReference type="SMART" id="SM00562">
    <property type="entry name" value="NDK"/>
    <property type="match status" value="1"/>
</dbReference>
<dbReference type="SUPFAM" id="SSF54919">
    <property type="entry name" value="Nucleoside diphosphate kinase, NDK"/>
    <property type="match status" value="1"/>
</dbReference>
<dbReference type="PROSITE" id="PS00469">
    <property type="entry name" value="NDPK"/>
    <property type="match status" value="1"/>
</dbReference>
<dbReference type="PROSITE" id="PS51374">
    <property type="entry name" value="NDPK_LIKE"/>
    <property type="match status" value="1"/>
</dbReference>
<name>NDK_SERP5</name>
<organism>
    <name type="scientific">Serratia proteamaculans (strain 568)</name>
    <dbReference type="NCBI Taxonomy" id="399741"/>
    <lineage>
        <taxon>Bacteria</taxon>
        <taxon>Pseudomonadati</taxon>
        <taxon>Pseudomonadota</taxon>
        <taxon>Gammaproteobacteria</taxon>
        <taxon>Enterobacterales</taxon>
        <taxon>Yersiniaceae</taxon>
        <taxon>Serratia</taxon>
    </lineage>
</organism>
<protein>
    <recommendedName>
        <fullName evidence="1">Nucleoside diphosphate kinase</fullName>
        <shortName evidence="1">NDK</shortName>
        <shortName evidence="1">NDP kinase</shortName>
        <ecNumber evidence="1">2.7.4.6</ecNumber>
    </recommendedName>
    <alternativeName>
        <fullName evidence="1">Nucleoside-2-P kinase</fullName>
    </alternativeName>
</protein>
<reference key="1">
    <citation type="submission" date="2007-09" db="EMBL/GenBank/DDBJ databases">
        <title>Complete sequence of chromosome of Serratia proteamaculans 568.</title>
        <authorList>
            <consortium name="US DOE Joint Genome Institute"/>
            <person name="Copeland A."/>
            <person name="Lucas S."/>
            <person name="Lapidus A."/>
            <person name="Barry K."/>
            <person name="Glavina del Rio T."/>
            <person name="Dalin E."/>
            <person name="Tice H."/>
            <person name="Pitluck S."/>
            <person name="Chain P."/>
            <person name="Malfatti S."/>
            <person name="Shin M."/>
            <person name="Vergez L."/>
            <person name="Schmutz J."/>
            <person name="Larimer F."/>
            <person name="Land M."/>
            <person name="Hauser L."/>
            <person name="Kyrpides N."/>
            <person name="Kim E."/>
            <person name="Taghavi S."/>
            <person name="Newman L."/>
            <person name="Vangronsveld J."/>
            <person name="van der Lelie D."/>
            <person name="Richardson P."/>
        </authorList>
    </citation>
    <scope>NUCLEOTIDE SEQUENCE [LARGE SCALE GENOMIC DNA]</scope>
    <source>
        <strain>568</strain>
    </source>
</reference>